<dbReference type="EMBL" id="AF329193">
    <property type="protein sequence ID" value="AAK31105.1"/>
    <property type="molecule type" value="mRNA"/>
</dbReference>
<dbReference type="EMBL" id="AF344424">
    <property type="protein sequence ID" value="AAK15370.1"/>
    <property type="molecule type" value="mRNA"/>
</dbReference>
<dbReference type="EMBL" id="AY254343">
    <property type="protein sequence ID" value="AAP13471.1"/>
    <property type="molecule type" value="mRNA"/>
</dbReference>
<dbReference type="EMBL" id="AY271901">
    <property type="protein sequence ID" value="AAP49000.1"/>
    <property type="molecule type" value="mRNA"/>
</dbReference>
<dbReference type="EMBL" id="AY271902">
    <property type="protein sequence ID" value="AAP49001.1"/>
    <property type="molecule type" value="mRNA"/>
</dbReference>
<dbReference type="EMBL" id="AL162253">
    <property type="status" value="NOT_ANNOTATED_CDS"/>
    <property type="molecule type" value="Genomic_DNA"/>
</dbReference>
<dbReference type="EMBL" id="BC074766">
    <property type="protein sequence ID" value="AAH74766.1"/>
    <property type="molecule type" value="mRNA"/>
</dbReference>
<dbReference type="EMBL" id="BC113678">
    <property type="protein sequence ID" value="AAI13679.1"/>
    <property type="molecule type" value="mRNA"/>
</dbReference>
<dbReference type="EMBL" id="BC113680">
    <property type="protein sequence ID" value="AAI13681.1"/>
    <property type="molecule type" value="mRNA"/>
</dbReference>
<dbReference type="CCDS" id="CCDS6465.1">
    <molecule id="Q9BQ51-1"/>
</dbReference>
<dbReference type="RefSeq" id="NP_079515.2">
    <molecule id="Q9BQ51-1"/>
    <property type="nucleotide sequence ID" value="NM_025239.4"/>
</dbReference>
<dbReference type="PDB" id="6UMT">
    <property type="method" value="X-ray"/>
    <property type="resolution" value="1.99 A"/>
    <property type="chains" value="B=1-123"/>
</dbReference>
<dbReference type="PDB" id="8J3V">
    <property type="method" value="NMR"/>
    <property type="chains" value="A=214-273"/>
</dbReference>
<dbReference type="PDBsum" id="6UMT"/>
<dbReference type="PDBsum" id="8J3V"/>
<dbReference type="SMR" id="Q9BQ51"/>
<dbReference type="BioGRID" id="123259">
    <property type="interactions" value="36"/>
</dbReference>
<dbReference type="FunCoup" id="Q9BQ51">
    <property type="interactions" value="692"/>
</dbReference>
<dbReference type="IntAct" id="Q9BQ51">
    <property type="interactions" value="34"/>
</dbReference>
<dbReference type="STRING" id="9606.ENSP00000380855"/>
<dbReference type="BindingDB" id="Q9BQ51"/>
<dbReference type="ChEMBL" id="CHEMBL3713006"/>
<dbReference type="GlyCosmos" id="Q9BQ51">
    <property type="glycosylation" value="5 sites, No reported glycans"/>
</dbReference>
<dbReference type="GlyGen" id="Q9BQ51">
    <property type="glycosylation" value="6 sites"/>
</dbReference>
<dbReference type="iPTMnet" id="Q9BQ51"/>
<dbReference type="PhosphoSitePlus" id="Q9BQ51"/>
<dbReference type="SwissPalm" id="Q9BQ51"/>
<dbReference type="BioMuta" id="PDCD1LG2"/>
<dbReference type="DMDM" id="73917618"/>
<dbReference type="CPTAC" id="CPTAC-5986"/>
<dbReference type="jPOST" id="Q9BQ51"/>
<dbReference type="MassIVE" id="Q9BQ51"/>
<dbReference type="PaxDb" id="9606-ENSP00000380855"/>
<dbReference type="PeptideAtlas" id="Q9BQ51"/>
<dbReference type="ProteomicsDB" id="78624">
    <molecule id="Q9BQ51-1"/>
</dbReference>
<dbReference type="ProteomicsDB" id="78625">
    <molecule id="Q9BQ51-2"/>
</dbReference>
<dbReference type="ProteomicsDB" id="78626">
    <molecule id="Q9BQ51-3"/>
</dbReference>
<dbReference type="ABCD" id="Q9BQ51">
    <property type="antibodies" value="8 sequenced antibodies"/>
</dbReference>
<dbReference type="Antibodypedia" id="2736">
    <property type="antibodies" value="1172 antibodies from 42 providers"/>
</dbReference>
<dbReference type="CPTC" id="Q9BQ51">
    <property type="antibodies" value="1 antibody"/>
</dbReference>
<dbReference type="DNASU" id="80380"/>
<dbReference type="Ensembl" id="ENST00000397747.5">
    <molecule id="Q9BQ51-1"/>
    <property type="protein sequence ID" value="ENSP00000380855.3"/>
    <property type="gene ID" value="ENSG00000197646.8"/>
</dbReference>
<dbReference type="GeneID" id="80380"/>
<dbReference type="KEGG" id="hsa:80380"/>
<dbReference type="MANE-Select" id="ENST00000397747.5">
    <property type="protein sequence ID" value="ENSP00000380855.3"/>
    <property type="RefSeq nucleotide sequence ID" value="NM_025239.4"/>
    <property type="RefSeq protein sequence ID" value="NP_079515.2"/>
</dbReference>
<dbReference type="UCSC" id="uc003zjg.5">
    <molecule id="Q9BQ51-1"/>
    <property type="organism name" value="human"/>
</dbReference>
<dbReference type="AGR" id="HGNC:18731"/>
<dbReference type="CTD" id="80380"/>
<dbReference type="DisGeNET" id="80380"/>
<dbReference type="GeneCards" id="PDCD1LG2"/>
<dbReference type="HGNC" id="HGNC:18731">
    <property type="gene designation" value="PDCD1LG2"/>
</dbReference>
<dbReference type="HPA" id="ENSG00000197646">
    <property type="expression patterns" value="Tissue enhanced (lymphoid)"/>
</dbReference>
<dbReference type="MalaCards" id="PDCD1LG2"/>
<dbReference type="MIM" id="605723">
    <property type="type" value="gene"/>
</dbReference>
<dbReference type="neXtProt" id="NX_Q9BQ51"/>
<dbReference type="OpenTargets" id="ENSG00000197646"/>
<dbReference type="PharmGKB" id="PA134891547"/>
<dbReference type="VEuPathDB" id="HostDB:ENSG00000197646"/>
<dbReference type="eggNOG" id="ENOG502S1Y9">
    <property type="taxonomic scope" value="Eukaryota"/>
</dbReference>
<dbReference type="GeneTree" id="ENSGT00940000161373"/>
<dbReference type="HOGENOM" id="CLU_013137_8_3_1"/>
<dbReference type="InParanoid" id="Q9BQ51"/>
<dbReference type="OMA" id="ELYIVEH"/>
<dbReference type="OrthoDB" id="8680608at2759"/>
<dbReference type="PAN-GO" id="Q9BQ51">
    <property type="GO annotations" value="7 GO annotations based on evolutionary models"/>
</dbReference>
<dbReference type="PhylomeDB" id="Q9BQ51"/>
<dbReference type="TreeFam" id="TF331083"/>
<dbReference type="PathwayCommons" id="Q9BQ51"/>
<dbReference type="Reactome" id="R-HSA-389948">
    <property type="pathway name" value="Co-inhibition by PD-1"/>
</dbReference>
<dbReference type="SignaLink" id="Q9BQ51"/>
<dbReference type="BioGRID-ORCS" id="80380">
    <property type="hits" value="10 hits in 1143 CRISPR screens"/>
</dbReference>
<dbReference type="ChiTaRS" id="PDCD1LG2">
    <property type="organism name" value="human"/>
</dbReference>
<dbReference type="GeneWiki" id="PDCD1LG2"/>
<dbReference type="GenomeRNAi" id="80380"/>
<dbReference type="Pharos" id="Q9BQ51">
    <property type="development level" value="Tchem"/>
</dbReference>
<dbReference type="PRO" id="PR:Q9BQ51"/>
<dbReference type="Proteomes" id="UP000005640">
    <property type="component" value="Chromosome 9"/>
</dbReference>
<dbReference type="RNAct" id="Q9BQ51">
    <property type="molecule type" value="protein"/>
</dbReference>
<dbReference type="Bgee" id="ENSG00000197646">
    <property type="expression patterns" value="Expressed in stromal cell of endometrium and 89 other cell types or tissues"/>
</dbReference>
<dbReference type="GO" id="GO:0012505">
    <property type="term" value="C:endomembrane system"/>
    <property type="evidence" value="ECO:0007669"/>
    <property type="project" value="UniProtKB-SubCell"/>
</dbReference>
<dbReference type="GO" id="GO:0009897">
    <property type="term" value="C:external side of plasma membrane"/>
    <property type="evidence" value="ECO:0000318"/>
    <property type="project" value="GO_Central"/>
</dbReference>
<dbReference type="GO" id="GO:0005576">
    <property type="term" value="C:extracellular region"/>
    <property type="evidence" value="ECO:0007669"/>
    <property type="project" value="UniProtKB-SubCell"/>
</dbReference>
<dbReference type="GO" id="GO:0005886">
    <property type="term" value="C:plasma membrane"/>
    <property type="evidence" value="ECO:0000304"/>
    <property type="project" value="Reactome"/>
</dbReference>
<dbReference type="GO" id="GO:0002250">
    <property type="term" value="P:adaptive immune response"/>
    <property type="evidence" value="ECO:0007669"/>
    <property type="project" value="UniProtKB-KW"/>
</dbReference>
<dbReference type="GO" id="GO:0007166">
    <property type="term" value="P:cell surface receptor signaling pathway"/>
    <property type="evidence" value="ECO:0000318"/>
    <property type="project" value="GO_Central"/>
</dbReference>
<dbReference type="GO" id="GO:0071222">
    <property type="term" value="P:cellular response to lipopolysaccharide"/>
    <property type="evidence" value="ECO:0000318"/>
    <property type="project" value="GO_Central"/>
</dbReference>
<dbReference type="GO" id="GO:0006955">
    <property type="term" value="P:immune response"/>
    <property type="evidence" value="ECO:0000318"/>
    <property type="project" value="GO_Central"/>
</dbReference>
<dbReference type="GO" id="GO:0046007">
    <property type="term" value="P:negative regulation of activated T cell proliferation"/>
    <property type="evidence" value="ECO:0000315"/>
    <property type="project" value="UniProtKB"/>
</dbReference>
<dbReference type="GO" id="GO:0032693">
    <property type="term" value="P:negative regulation of interleukin-10 production"/>
    <property type="evidence" value="ECO:0000315"/>
    <property type="project" value="UniProtKB"/>
</dbReference>
<dbReference type="GO" id="GO:0042130">
    <property type="term" value="P:negative regulation of T cell proliferation"/>
    <property type="evidence" value="ECO:0000318"/>
    <property type="project" value="GO_Central"/>
</dbReference>
<dbReference type="GO" id="GO:0032689">
    <property type="term" value="P:negative regulation of type II interferon production"/>
    <property type="evidence" value="ECO:0000315"/>
    <property type="project" value="UniProtKB"/>
</dbReference>
<dbReference type="GO" id="GO:0042102">
    <property type="term" value="P:positive regulation of T cell proliferation"/>
    <property type="evidence" value="ECO:0000318"/>
    <property type="project" value="GO_Central"/>
</dbReference>
<dbReference type="GO" id="GO:0031295">
    <property type="term" value="P:T cell costimulation"/>
    <property type="evidence" value="ECO:0000318"/>
    <property type="project" value="GO_Central"/>
</dbReference>
<dbReference type="CDD" id="cd20986">
    <property type="entry name" value="IgC1_PD-L2"/>
    <property type="match status" value="1"/>
</dbReference>
<dbReference type="CDD" id="cd20983">
    <property type="entry name" value="IgV_PD-L2"/>
    <property type="match status" value="1"/>
</dbReference>
<dbReference type="FunFam" id="2.60.40.10:FF:001078">
    <property type="entry name" value="Programmed cell death 1 ligand 2"/>
    <property type="match status" value="1"/>
</dbReference>
<dbReference type="FunFam" id="2.60.40.10:FF:001239">
    <property type="entry name" value="Programmed cell death 1 ligand 2"/>
    <property type="match status" value="1"/>
</dbReference>
<dbReference type="Gene3D" id="2.60.40.10">
    <property type="entry name" value="Immunoglobulins"/>
    <property type="match status" value="2"/>
</dbReference>
<dbReference type="InterPro" id="IPR053896">
    <property type="entry name" value="BTN3A2-like_Ig-C"/>
</dbReference>
<dbReference type="InterPro" id="IPR007110">
    <property type="entry name" value="Ig-like_dom"/>
</dbReference>
<dbReference type="InterPro" id="IPR036179">
    <property type="entry name" value="Ig-like_dom_sf"/>
</dbReference>
<dbReference type="InterPro" id="IPR013783">
    <property type="entry name" value="Ig-like_fold"/>
</dbReference>
<dbReference type="InterPro" id="IPR003599">
    <property type="entry name" value="Ig_sub"/>
</dbReference>
<dbReference type="InterPro" id="IPR051713">
    <property type="entry name" value="T-cell_Activation_Regulation"/>
</dbReference>
<dbReference type="PANTHER" id="PTHR25466:SF1">
    <property type="entry name" value="PROGRAMMED CELL DEATH 1 LIGAND 2"/>
    <property type="match status" value="1"/>
</dbReference>
<dbReference type="PANTHER" id="PTHR25466">
    <property type="entry name" value="T-LYMPHOCYTE ACTIVATION ANTIGEN"/>
    <property type="match status" value="1"/>
</dbReference>
<dbReference type="Pfam" id="PF22705">
    <property type="entry name" value="C2-set_3"/>
    <property type="match status" value="1"/>
</dbReference>
<dbReference type="SMART" id="SM00409">
    <property type="entry name" value="IG"/>
    <property type="match status" value="1"/>
</dbReference>
<dbReference type="SUPFAM" id="SSF48726">
    <property type="entry name" value="Immunoglobulin"/>
    <property type="match status" value="2"/>
</dbReference>
<dbReference type="PROSITE" id="PS50835">
    <property type="entry name" value="IG_LIKE"/>
    <property type="match status" value="1"/>
</dbReference>
<name>PD1L2_HUMAN</name>
<accession>Q9BQ51</accession>
<accession>Q14CN8</accession>
<accession>Q5T7Z6</accession>
<accession>Q6JXL8</accession>
<accession>Q6JXL9</accession>
<sequence>MIFLLLMLSLELQLHQIAALFTVTVPKELYIIEHGSNVTLECNFDTGSHVNLGAITASLQKVENDTSPHRERATLLEEQLPLGKASFHIPQVQVRDEGQYQCIIIYGVAWDYKYLTLKVKASYRKINTHILKVPETDEVELTCQATGYPLAEVSWPNVSVPANTSHSRTPEGLYQVTSVLRLKPPPGRNFSCVFWNTHVRELTLASIDLQSQMEPRTHPTWLLHIFIPFCIIAFIFIATVIALRKQLCQKLYSSKDTTKRPVTTTKREVNSAI</sequence>
<proteinExistence type="evidence at protein level"/>
<gene>
    <name type="primary">PDCD1LG2</name>
    <name type="synonym">B7DC</name>
    <name type="synonym">CD273</name>
    <name type="synonym">PDCD1L2</name>
    <name type="synonym">PDL2</name>
</gene>
<evidence type="ECO:0000250" key="1"/>
<evidence type="ECO:0000250" key="2">
    <source>
        <dbReference type="UniProtKB" id="Q9WUL5"/>
    </source>
</evidence>
<evidence type="ECO:0000255" key="3"/>
<evidence type="ECO:0000255" key="4">
    <source>
        <dbReference type="PROSITE-ProRule" id="PRU00114"/>
    </source>
</evidence>
<evidence type="ECO:0000269" key="5">
    <source>
    </source>
</evidence>
<evidence type="ECO:0000269" key="6">
    <source>
    </source>
</evidence>
<evidence type="ECO:0000269" key="7">
    <source>
    </source>
</evidence>
<evidence type="ECO:0000269" key="8">
    <source>
    </source>
</evidence>
<evidence type="ECO:0000269" key="9">
    <source>
    </source>
</evidence>
<evidence type="ECO:0000303" key="10">
    <source>
    </source>
</evidence>
<evidence type="ECO:0000305" key="11"/>
<evidence type="ECO:0000305" key="12">
    <source>
    </source>
</evidence>
<evidence type="ECO:0000305" key="13">
    <source>
    </source>
</evidence>
<evidence type="ECO:0007829" key="14">
    <source>
        <dbReference type="PDB" id="6UMT"/>
    </source>
</evidence>
<evidence type="ECO:0007829" key="15">
    <source>
        <dbReference type="PDB" id="8J3V"/>
    </source>
</evidence>
<organism>
    <name type="scientific">Homo sapiens</name>
    <name type="common">Human</name>
    <dbReference type="NCBI Taxonomy" id="9606"/>
    <lineage>
        <taxon>Eukaryota</taxon>
        <taxon>Metazoa</taxon>
        <taxon>Chordata</taxon>
        <taxon>Craniata</taxon>
        <taxon>Vertebrata</taxon>
        <taxon>Euteleostomi</taxon>
        <taxon>Mammalia</taxon>
        <taxon>Eutheria</taxon>
        <taxon>Euarchontoglires</taxon>
        <taxon>Primates</taxon>
        <taxon>Haplorrhini</taxon>
        <taxon>Catarrhini</taxon>
        <taxon>Hominidae</taxon>
        <taxon>Homo</taxon>
    </lineage>
</organism>
<comment type="function">
    <text evidence="1">Involved in the costimulatory signal, essential for T-cell proliferation and IFNG production in a PDCD1-independent manner. Interaction with PDCD1 inhibits T-cell proliferation by blocking cell cycle progression and cytokine production (By similarity).</text>
</comment>
<comment type="subunit">
    <text evidence="1">Interacts with PDCD1.</text>
</comment>
<comment type="interaction">
    <interactant intactId="EBI-16427978">
        <id>Q9BQ51</id>
    </interactant>
    <interactant intactId="EBI-721179">
        <id>P27449</id>
        <label>ATP6V0C</label>
    </interactant>
    <organismsDiffer>false</organismsDiffer>
    <experiments>3</experiments>
</comment>
<comment type="interaction">
    <interactant intactId="EBI-16427978">
        <id>Q9BQ51</id>
    </interactant>
    <interactant intactId="EBI-10976398">
        <id>Q7Z2K6</id>
        <label>ERMP1</label>
    </interactant>
    <organismsDiffer>false</organismsDiffer>
    <experiments>3</experiments>
</comment>
<comment type="interaction">
    <interactant intactId="EBI-16427978">
        <id>Q9BQ51</id>
    </interactant>
    <interactant intactId="EBI-3925203">
        <id>Q8N3T1</id>
        <label>GALNT15</label>
    </interactant>
    <organismsDiffer>false</organismsDiffer>
    <experiments>3</experiments>
</comment>
<comment type="interaction">
    <interactant intactId="EBI-16427978">
        <id>Q9BQ51</id>
    </interactant>
    <interactant intactId="EBI-2927498">
        <id>O60883</id>
        <label>GPR37L1</label>
    </interactant>
    <organismsDiffer>false</organismsDiffer>
    <experiments>3</experiments>
</comment>
<comment type="interaction">
    <interactant intactId="EBI-16427978">
        <id>Q9BQ51</id>
    </interactant>
    <interactant intactId="EBI-12007212">
        <id>Q86UP2-3</id>
        <label>KTN1</label>
    </interactant>
    <organismsDiffer>false</organismsDiffer>
    <experiments>3</experiments>
</comment>
<comment type="interaction">
    <interactant intactId="EBI-16427978">
        <id>Q9BQ51</id>
    </interactant>
    <interactant intactId="EBI-2830349">
        <id>Q7Z4F1</id>
        <label>LRP10</label>
    </interactant>
    <organismsDiffer>false</organismsDiffer>
    <experiments>3</experiments>
</comment>
<comment type="interaction">
    <interactant intactId="EBI-16427978">
        <id>Q9BQ51</id>
    </interactant>
    <interactant intactId="EBI-2858252">
        <id>Q6ZSS7</id>
        <label>MFSD6</label>
    </interactant>
    <organismsDiffer>false</organismsDiffer>
    <experiments>3</experiments>
</comment>
<comment type="interaction">
    <interactant intactId="EBI-16427978">
        <id>Q9BQ51</id>
    </interactant>
    <interactant intactId="EBI-4314328">
        <id>Q15116</id>
        <label>PDCD1</label>
    </interactant>
    <organismsDiffer>false</organismsDiffer>
    <experiments>14</experiments>
</comment>
<comment type="interaction">
    <interactant intactId="EBI-16427978">
        <id>Q9BQ51</id>
    </interactant>
    <interactant intactId="EBI-8636004">
        <id>Q96GQ5</id>
        <label>RUSF1</label>
    </interactant>
    <organismsDiffer>false</organismsDiffer>
    <experiments>3</experiments>
</comment>
<comment type="interaction">
    <interactant intactId="EBI-16427978">
        <id>Q9BQ51</id>
    </interactant>
    <interactant intactId="EBI-17295964">
        <id>Q9NQQ7-3</id>
        <label>SLC35C2</label>
    </interactant>
    <organismsDiffer>false</organismsDiffer>
    <experiments>3</experiments>
</comment>
<comment type="interaction">
    <interactant intactId="EBI-16427978">
        <id>Q9BQ51</id>
    </interactant>
    <interactant intactId="EBI-9978441">
        <id>Q9H2H9</id>
        <label>SLC38A1</label>
    </interactant>
    <organismsDiffer>false</organismsDiffer>
    <experiments>3</experiments>
</comment>
<comment type="interaction">
    <interactant intactId="EBI-16427978">
        <id>Q9BQ51</id>
    </interactant>
    <interactant intactId="EBI-10314552">
        <id>Q9NVC3</id>
        <label>SLC38A7</label>
    </interactant>
    <organismsDiffer>false</organismsDiffer>
    <experiments>3</experiments>
</comment>
<comment type="interaction">
    <interactant intactId="EBI-16427978">
        <id>Q9BQ51</id>
    </interactant>
    <interactant intactId="EBI-10290130">
        <id>Q96JW4</id>
        <label>SLC41A2</label>
    </interactant>
    <organismsDiffer>false</organismsDiffer>
    <experiments>3</experiments>
</comment>
<comment type="interaction">
    <interactant intactId="EBI-16427978">
        <id>Q9BQ51</id>
    </interactant>
    <interactant intactId="EBI-4289564">
        <id>P30825</id>
        <label>SLC7A1</label>
    </interactant>
    <organismsDiffer>false</organismsDiffer>
    <experiments>3</experiments>
</comment>
<comment type="interaction">
    <interactant intactId="EBI-16427978">
        <id>Q9BQ51</id>
    </interactant>
    <interactant intactId="EBI-741850">
        <id>Q9BZL3</id>
        <label>SMIM3</label>
    </interactant>
    <organismsDiffer>false</organismsDiffer>
    <experiments>3</experiments>
</comment>
<comment type="interaction">
    <interactant intactId="EBI-16427978">
        <id>Q9BQ51</id>
    </interactant>
    <interactant intactId="EBI-12963900">
        <id>Q9NYW0</id>
        <label>TAS2R10</label>
    </interactant>
    <organismsDiffer>false</organismsDiffer>
    <experiments>3</experiments>
</comment>
<comment type="interaction">
    <interactant intactId="EBI-16427978">
        <id>Q9BQ51</id>
    </interactant>
    <interactant intactId="EBI-348587">
        <id>Q9BVK8</id>
        <label>TMEM147</label>
    </interactant>
    <organismsDiffer>false</organismsDiffer>
    <experiments>3</experiments>
</comment>
<comment type="interaction">
    <interactant intactId="EBI-16427978">
        <id>Q9BQ51</id>
    </interactant>
    <interactant intactId="EBI-10173151">
        <id>A2RU14</id>
        <label>TMEM218</label>
    </interactant>
    <organismsDiffer>false</organismsDiffer>
    <experiments>3</experiments>
</comment>
<comment type="interaction">
    <interactant intactId="EBI-16427978">
        <id>Q9BQ51</id>
    </interactant>
    <interactant intactId="EBI-11528917">
        <id>Q8WW34-2</id>
        <label>TMEM239</label>
    </interactant>
    <organismsDiffer>false</organismsDiffer>
    <experiments>3</experiments>
</comment>
<comment type="interaction">
    <interactant intactId="EBI-16427978">
        <id>Q9BQ51</id>
    </interactant>
    <interactant intactId="EBI-12111910">
        <id>Q5BJF2</id>
        <label>TMEM97</label>
    </interactant>
    <organismsDiffer>false</organismsDiffer>
    <experiments>3</experiments>
</comment>
<comment type="subcellular location">
    <molecule>Isoform 3</molecule>
    <subcellularLocation>
        <location evidence="12">Secreted</location>
    </subcellularLocation>
</comment>
<comment type="subcellular location">
    <molecule>Isoform 2</molecule>
    <subcellularLocation>
        <location evidence="7">Endomembrane system</location>
        <topology evidence="3">Single-pass type I membrane protein</topology>
    </subcellularLocation>
</comment>
<comment type="subcellular location">
    <molecule>Isoform 1</molecule>
    <subcellularLocation>
        <location evidence="7">Cell membrane</location>
        <topology evidence="2 13">Single-pass type I membrane protein</topology>
    </subcellularLocation>
</comment>
<comment type="alternative products">
    <event type="alternative splicing"/>
    <isoform>
        <id>Q9BQ51-1</id>
        <name>1</name>
        <name>PD-L2I</name>
        <name>Type I</name>
        <sequence type="displayed"/>
    </isoform>
    <isoform>
        <id>Q9BQ51-2</id>
        <name>2</name>
        <name>PD-L2II</name>
        <name>Type II</name>
        <sequence type="described" ref="VSP_013740"/>
    </isoform>
    <isoform>
        <id>Q9BQ51-3</id>
        <name>3</name>
        <name>PD-L2III</name>
        <name>Type III</name>
        <sequence type="described" ref="VSP_013738 VSP_013739"/>
    </isoform>
</comment>
<comment type="tissue specificity">
    <text evidence="5">Highly expressed in heart, placenta, pancreas, lung and liver and weakly expressed in spleen, lymph nodes and thymus.</text>
</comment>
<comment type="induction">
    <text evidence="5 6">Up-regulated by IFNG/IFN-gamma stimulation in monocytes and induced on dendritic cells grown from peripheral blood mononuclear cells with CSF2 and IL4/interleukin-4.</text>
</comment>
<comment type="similarity">
    <text evidence="11">Belongs to the immunoglobulin superfamily. BTN/MOG family.</text>
</comment>
<keyword id="KW-0002">3D-structure</keyword>
<keyword id="KW-1064">Adaptive immunity</keyword>
<keyword id="KW-0025">Alternative splicing</keyword>
<keyword id="KW-1003">Cell membrane</keyword>
<keyword id="KW-0903">Direct protein sequencing</keyword>
<keyword id="KW-1015">Disulfide bond</keyword>
<keyword id="KW-0325">Glycoprotein</keyword>
<keyword id="KW-0391">Immunity</keyword>
<keyword id="KW-0393">Immunoglobulin domain</keyword>
<keyword id="KW-0472">Membrane</keyword>
<keyword id="KW-1267">Proteomics identification</keyword>
<keyword id="KW-0675">Receptor</keyword>
<keyword id="KW-1185">Reference proteome</keyword>
<keyword id="KW-0677">Repeat</keyword>
<keyword id="KW-0964">Secreted</keyword>
<keyword id="KW-0732">Signal</keyword>
<keyword id="KW-0812">Transmembrane</keyword>
<keyword id="KW-1133">Transmembrane helix</keyword>
<protein>
    <recommendedName>
        <fullName>Programmed cell death 1 ligand 2</fullName>
        <shortName>PD-1 ligand 2</shortName>
        <shortName>PD-L2</shortName>
        <shortName>PDCD1 ligand 2</shortName>
        <shortName>Programmed death ligand 2</shortName>
    </recommendedName>
    <alternativeName>
        <fullName>Butyrophilin B7-DC</fullName>
        <shortName>B7-DC</shortName>
    </alternativeName>
    <cdAntigenName>CD273</cdAntigenName>
</protein>
<reference key="1">
    <citation type="journal article" date="2001" name="J. Exp. Med.">
        <title>B7-DC, a new dendritic cell molecule with potent costimulatory properties for T cells.</title>
        <authorList>
            <person name="Tseng S.-Y."/>
            <person name="Otsuji M."/>
            <person name="Gorski K."/>
            <person name="Huang X."/>
            <person name="Slansky J.E."/>
            <person name="Pai S.I."/>
            <person name="Shalabi A."/>
            <person name="Shin T."/>
            <person name="Pardoll D.M."/>
            <person name="Tsuchiya H."/>
        </authorList>
    </citation>
    <scope>NUCLEOTIDE SEQUENCE [MRNA] (ISOFORM 1)</scope>
    <scope>INDUCTION</scope>
    <scope>VARIANT SER-229</scope>
</reference>
<reference key="2">
    <citation type="journal article" date="2001" name="Nat. Immunol.">
        <title>PD-L2 is a second ligand for PD-1 and inhibits T cell activation.</title>
        <authorList>
            <person name="Latchman Y."/>
            <person name="Wood C.R."/>
            <person name="Chernova T."/>
            <person name="Chaudhary D."/>
            <person name="Borde M."/>
            <person name="Chernova I."/>
            <person name="Iwai Y."/>
            <person name="Long A.J."/>
            <person name="Brown J.A."/>
            <person name="Nunes R."/>
            <person name="Greenfield E.A."/>
            <person name="Bourque K."/>
            <person name="Boussiotis V.A."/>
            <person name="Carter L.L."/>
            <person name="Carreno B.M."/>
            <person name="Malenkovich N."/>
            <person name="Nishimura H."/>
            <person name="Okazaki T."/>
            <person name="Honjo T."/>
            <person name="Sharpe A.H."/>
            <person name="Freeman G.J."/>
        </authorList>
    </citation>
    <scope>NUCLEOTIDE SEQUENCE [MRNA] (ISOFORM 1)</scope>
    <scope>TISSUE SPECIFICITY</scope>
    <scope>INDUCTION</scope>
    <scope>VARIANT SER-229</scope>
</reference>
<reference key="3">
    <citation type="journal article" date="2004" name="Acta Biochim. Biophys. Sin.">
        <title>Cloning and identification of two novel splice variants of human PD-L2.</title>
        <authorList>
            <person name="He X.-H."/>
            <person name="Liu Y."/>
            <person name="Xu L.-H."/>
            <person name="Zeng Y.-Y."/>
        </authorList>
    </citation>
    <scope>NUCLEOTIDE SEQUENCE [MRNA] (ISOFORMS 1; 2 AND 3)</scope>
    <scope>SUBCELLULAR LOCATION (ISOFORMS 1; 2 AND 3)</scope>
    <scope>VARIANT SER-229</scope>
</reference>
<reference key="4">
    <citation type="journal article" date="2004" name="Nature">
        <title>DNA sequence and analysis of human chromosome 9.</title>
        <authorList>
            <person name="Humphray S.J."/>
            <person name="Oliver K."/>
            <person name="Hunt A.R."/>
            <person name="Plumb R.W."/>
            <person name="Loveland J.E."/>
            <person name="Howe K.L."/>
            <person name="Andrews T.D."/>
            <person name="Searle S."/>
            <person name="Hunt S.E."/>
            <person name="Scott C.E."/>
            <person name="Jones M.C."/>
            <person name="Ainscough R."/>
            <person name="Almeida J.P."/>
            <person name="Ambrose K.D."/>
            <person name="Ashwell R.I.S."/>
            <person name="Babbage A.K."/>
            <person name="Babbage S."/>
            <person name="Bagguley C.L."/>
            <person name="Bailey J."/>
            <person name="Banerjee R."/>
            <person name="Barker D.J."/>
            <person name="Barlow K.F."/>
            <person name="Bates K."/>
            <person name="Beasley H."/>
            <person name="Beasley O."/>
            <person name="Bird C.P."/>
            <person name="Bray-Allen S."/>
            <person name="Brown A.J."/>
            <person name="Brown J.Y."/>
            <person name="Burford D."/>
            <person name="Burrill W."/>
            <person name="Burton J."/>
            <person name="Carder C."/>
            <person name="Carter N.P."/>
            <person name="Chapman J.C."/>
            <person name="Chen Y."/>
            <person name="Clarke G."/>
            <person name="Clark S.Y."/>
            <person name="Clee C.M."/>
            <person name="Clegg S."/>
            <person name="Collier R.E."/>
            <person name="Corby N."/>
            <person name="Crosier M."/>
            <person name="Cummings A.T."/>
            <person name="Davies J."/>
            <person name="Dhami P."/>
            <person name="Dunn M."/>
            <person name="Dutta I."/>
            <person name="Dyer L.W."/>
            <person name="Earthrowl M.E."/>
            <person name="Faulkner L."/>
            <person name="Fleming C.J."/>
            <person name="Frankish A."/>
            <person name="Frankland J.A."/>
            <person name="French L."/>
            <person name="Fricker D.G."/>
            <person name="Garner P."/>
            <person name="Garnett J."/>
            <person name="Ghori J."/>
            <person name="Gilbert J.G.R."/>
            <person name="Glison C."/>
            <person name="Grafham D.V."/>
            <person name="Gribble S."/>
            <person name="Griffiths C."/>
            <person name="Griffiths-Jones S."/>
            <person name="Grocock R."/>
            <person name="Guy J."/>
            <person name="Hall R.E."/>
            <person name="Hammond S."/>
            <person name="Harley J.L."/>
            <person name="Harrison E.S.I."/>
            <person name="Hart E.A."/>
            <person name="Heath P.D."/>
            <person name="Henderson C.D."/>
            <person name="Hopkins B.L."/>
            <person name="Howard P.J."/>
            <person name="Howden P.J."/>
            <person name="Huckle E."/>
            <person name="Johnson C."/>
            <person name="Johnson D."/>
            <person name="Joy A.A."/>
            <person name="Kay M."/>
            <person name="Keenan S."/>
            <person name="Kershaw J.K."/>
            <person name="Kimberley A.M."/>
            <person name="King A."/>
            <person name="Knights A."/>
            <person name="Laird G.K."/>
            <person name="Langford C."/>
            <person name="Lawlor S."/>
            <person name="Leongamornlert D.A."/>
            <person name="Leversha M."/>
            <person name="Lloyd C."/>
            <person name="Lloyd D.M."/>
            <person name="Lovell J."/>
            <person name="Martin S."/>
            <person name="Mashreghi-Mohammadi M."/>
            <person name="Matthews L."/>
            <person name="McLaren S."/>
            <person name="McLay K.E."/>
            <person name="McMurray A."/>
            <person name="Milne S."/>
            <person name="Nickerson T."/>
            <person name="Nisbett J."/>
            <person name="Nordsiek G."/>
            <person name="Pearce A.V."/>
            <person name="Peck A.I."/>
            <person name="Porter K.M."/>
            <person name="Pandian R."/>
            <person name="Pelan S."/>
            <person name="Phillimore B."/>
            <person name="Povey S."/>
            <person name="Ramsey Y."/>
            <person name="Rand V."/>
            <person name="Scharfe M."/>
            <person name="Sehra H.K."/>
            <person name="Shownkeen R."/>
            <person name="Sims S.K."/>
            <person name="Skuce C.D."/>
            <person name="Smith M."/>
            <person name="Steward C.A."/>
            <person name="Swarbreck D."/>
            <person name="Sycamore N."/>
            <person name="Tester J."/>
            <person name="Thorpe A."/>
            <person name="Tracey A."/>
            <person name="Tromans A."/>
            <person name="Thomas D.W."/>
            <person name="Wall M."/>
            <person name="Wallis J.M."/>
            <person name="West A.P."/>
            <person name="Whitehead S.L."/>
            <person name="Willey D.L."/>
            <person name="Williams S.A."/>
            <person name="Wilming L."/>
            <person name="Wray P.W."/>
            <person name="Young L."/>
            <person name="Ashurst J.L."/>
            <person name="Coulson A."/>
            <person name="Blocker H."/>
            <person name="Durbin R.M."/>
            <person name="Sulston J.E."/>
            <person name="Hubbard T."/>
            <person name="Jackson M.J."/>
            <person name="Bentley D.R."/>
            <person name="Beck S."/>
            <person name="Rogers J."/>
            <person name="Dunham I."/>
        </authorList>
    </citation>
    <scope>NUCLEOTIDE SEQUENCE [LARGE SCALE GENOMIC DNA]</scope>
</reference>
<reference key="5">
    <citation type="journal article" date="2004" name="Genome Res.">
        <title>The status, quality, and expansion of the NIH full-length cDNA project: the Mammalian Gene Collection (MGC).</title>
        <authorList>
            <consortium name="The MGC Project Team"/>
        </authorList>
    </citation>
    <scope>NUCLEOTIDE SEQUENCE [LARGE SCALE MRNA] (ISOFORM 1)</scope>
    <scope>VARIANT SER-229</scope>
    <source>
        <tissue>Brain</tissue>
        <tissue>Lung</tissue>
    </source>
</reference>
<reference key="6">
    <citation type="journal article" date="2004" name="Protein Sci.">
        <title>Signal peptide prediction based on analysis of experimentally verified cleavage sites.</title>
        <authorList>
            <person name="Zhang Z."/>
            <person name="Henzel W.J."/>
        </authorList>
    </citation>
    <scope>PROTEIN SEQUENCE OF 20-34</scope>
</reference>
<feature type="signal peptide" evidence="8">
    <location>
        <begin position="1"/>
        <end position="19"/>
    </location>
</feature>
<feature type="chain" id="PRO_0000014555" description="Programmed cell death 1 ligand 2">
    <location>
        <begin position="20"/>
        <end position="273"/>
    </location>
</feature>
<feature type="topological domain" description="Extracellular" evidence="3">
    <location>
        <begin position="20"/>
        <end position="220"/>
    </location>
</feature>
<feature type="transmembrane region" description="Helical" evidence="3">
    <location>
        <begin position="221"/>
        <end position="241"/>
    </location>
</feature>
<feature type="topological domain" description="Cytoplasmic" evidence="3">
    <location>
        <begin position="242"/>
        <end position="273"/>
    </location>
</feature>
<feature type="domain" description="Ig-like V-type">
    <location>
        <begin position="21"/>
        <end position="118"/>
    </location>
</feature>
<feature type="domain" description="Ig-like C2-type">
    <location>
        <begin position="122"/>
        <end position="203"/>
    </location>
</feature>
<feature type="glycosylation site" description="N-linked (GlcNAc...) asparagine" evidence="3">
    <location>
        <position position="37"/>
    </location>
</feature>
<feature type="glycosylation site" description="N-linked (GlcNAc...) asparagine" evidence="3">
    <location>
        <position position="64"/>
    </location>
</feature>
<feature type="glycosylation site" description="N-linked (GlcNAc...) asparagine" evidence="3">
    <location>
        <position position="157"/>
    </location>
</feature>
<feature type="glycosylation site" description="N-linked (GlcNAc...) asparagine" evidence="3">
    <location>
        <position position="163"/>
    </location>
</feature>
<feature type="glycosylation site" description="N-linked (GlcNAc...) asparagine" evidence="3">
    <location>
        <position position="189"/>
    </location>
</feature>
<feature type="disulfide bond" evidence="4">
    <location>
        <begin position="42"/>
        <end position="102"/>
    </location>
</feature>
<feature type="disulfide bond" evidence="4">
    <location>
        <begin position="143"/>
        <end position="192"/>
    </location>
</feature>
<feature type="splice variant" id="VSP_013740" description="In isoform 2." evidence="10">
    <original>ASYRKINTHILKVPETDEVELTCQATGYPLAEVSWPNVSVPANTSHSRTPEGLYQVTSVLRLKPPPGRNFSCVFWNTHVRELTLASIDLQS</original>
    <variation>G</variation>
    <location>
        <begin position="121"/>
        <end position="211"/>
    </location>
</feature>
<feature type="splice variant" id="VSP_013738" description="In isoform 3." evidence="10">
    <original>ASYRKINTHILKVPETDEVELTCQATGYPLAEVSWPNVSVPANTSHSRTPEGLYQVTSVLRL</original>
    <variation>DGTQDPSNLAASHFHPLLHHCFHFHSHSDSPKKTTLSKAVFFKRHNKKTCHHNKEGSEQCYL</variation>
    <location>
        <begin position="121"/>
        <end position="182"/>
    </location>
</feature>
<feature type="splice variant" id="VSP_013739" description="In isoform 3." evidence="10">
    <location>
        <begin position="183"/>
        <end position="273"/>
    </location>
</feature>
<feature type="sequence variant" id="VAR_049842" description="In dbSNP:rs12339171.">
    <original>S</original>
    <variation>T</variation>
    <location>
        <position position="58"/>
    </location>
</feature>
<feature type="sequence variant" id="VAR_022449" description="In dbSNP:rs7854303." evidence="5 6 7 9">
    <original>F</original>
    <variation>S</variation>
    <location>
        <position position="229"/>
    </location>
</feature>
<feature type="sequence variant" id="VAR_049843" description="In dbSNP:rs7854413.">
    <original>I</original>
    <variation>T</variation>
    <location>
        <position position="241"/>
    </location>
</feature>
<feature type="strand" evidence="14">
    <location>
        <begin position="22"/>
        <end position="24"/>
    </location>
</feature>
<feature type="strand" evidence="14">
    <location>
        <begin position="29"/>
        <end position="33"/>
    </location>
</feature>
<feature type="strand" evidence="14">
    <location>
        <begin position="38"/>
        <end position="45"/>
    </location>
</feature>
<feature type="strand" evidence="14">
    <location>
        <begin position="53"/>
        <end position="62"/>
    </location>
</feature>
<feature type="helix" evidence="14">
    <location>
        <begin position="77"/>
        <end position="82"/>
    </location>
</feature>
<feature type="strand" evidence="14">
    <location>
        <begin position="84"/>
        <end position="91"/>
    </location>
</feature>
<feature type="helix" evidence="14">
    <location>
        <begin position="94"/>
        <end position="96"/>
    </location>
</feature>
<feature type="strand" evidence="14">
    <location>
        <begin position="98"/>
        <end position="106"/>
    </location>
</feature>
<feature type="strand" evidence="14">
    <location>
        <begin position="109"/>
        <end position="120"/>
    </location>
</feature>
<feature type="helix" evidence="15">
    <location>
        <begin position="220"/>
        <end position="250"/>
    </location>
</feature>